<name>PDXH_HAHCH</name>
<comment type="function">
    <text evidence="1">Catalyzes the oxidation of either pyridoxine 5'-phosphate (PNP) or pyridoxamine 5'-phosphate (PMP) into pyridoxal 5'-phosphate (PLP).</text>
</comment>
<comment type="catalytic activity">
    <reaction evidence="1">
        <text>pyridoxamine 5'-phosphate + O2 + H2O = pyridoxal 5'-phosphate + H2O2 + NH4(+)</text>
        <dbReference type="Rhea" id="RHEA:15817"/>
        <dbReference type="ChEBI" id="CHEBI:15377"/>
        <dbReference type="ChEBI" id="CHEBI:15379"/>
        <dbReference type="ChEBI" id="CHEBI:16240"/>
        <dbReference type="ChEBI" id="CHEBI:28938"/>
        <dbReference type="ChEBI" id="CHEBI:58451"/>
        <dbReference type="ChEBI" id="CHEBI:597326"/>
        <dbReference type="EC" id="1.4.3.5"/>
    </reaction>
</comment>
<comment type="catalytic activity">
    <reaction evidence="1">
        <text>pyridoxine 5'-phosphate + O2 = pyridoxal 5'-phosphate + H2O2</text>
        <dbReference type="Rhea" id="RHEA:15149"/>
        <dbReference type="ChEBI" id="CHEBI:15379"/>
        <dbReference type="ChEBI" id="CHEBI:16240"/>
        <dbReference type="ChEBI" id="CHEBI:58589"/>
        <dbReference type="ChEBI" id="CHEBI:597326"/>
        <dbReference type="EC" id="1.4.3.5"/>
    </reaction>
</comment>
<comment type="cofactor">
    <cofactor evidence="1">
        <name>FMN</name>
        <dbReference type="ChEBI" id="CHEBI:58210"/>
    </cofactor>
    <text evidence="1">Binds 1 FMN per subunit.</text>
</comment>
<comment type="pathway">
    <text evidence="1">Cofactor metabolism; pyridoxal 5'-phosphate salvage; pyridoxal 5'-phosphate from pyridoxamine 5'-phosphate: step 1/1.</text>
</comment>
<comment type="pathway">
    <text evidence="1">Cofactor metabolism; pyridoxal 5'-phosphate salvage; pyridoxal 5'-phosphate from pyridoxine 5'-phosphate: step 1/1.</text>
</comment>
<comment type="subunit">
    <text evidence="1">Homodimer.</text>
</comment>
<comment type="similarity">
    <text evidence="1">Belongs to the pyridoxamine 5'-phosphate oxidase family.</text>
</comment>
<dbReference type="EC" id="1.4.3.5" evidence="1"/>
<dbReference type="EMBL" id="CP000155">
    <property type="protein sequence ID" value="ABC31230.1"/>
    <property type="molecule type" value="Genomic_DNA"/>
</dbReference>
<dbReference type="RefSeq" id="WP_011398297.1">
    <property type="nucleotide sequence ID" value="NC_007645.1"/>
</dbReference>
<dbReference type="SMR" id="Q2SDP4"/>
<dbReference type="STRING" id="349521.HCH_04530"/>
<dbReference type="KEGG" id="hch:HCH_04530"/>
<dbReference type="eggNOG" id="COG0259">
    <property type="taxonomic scope" value="Bacteria"/>
</dbReference>
<dbReference type="HOGENOM" id="CLU_032263_2_2_6"/>
<dbReference type="OrthoDB" id="9780392at2"/>
<dbReference type="UniPathway" id="UPA01068">
    <property type="reaction ID" value="UER00304"/>
</dbReference>
<dbReference type="UniPathway" id="UPA01068">
    <property type="reaction ID" value="UER00305"/>
</dbReference>
<dbReference type="Proteomes" id="UP000000238">
    <property type="component" value="Chromosome"/>
</dbReference>
<dbReference type="GO" id="GO:0010181">
    <property type="term" value="F:FMN binding"/>
    <property type="evidence" value="ECO:0007669"/>
    <property type="project" value="UniProtKB-UniRule"/>
</dbReference>
<dbReference type="GO" id="GO:0004733">
    <property type="term" value="F:pyridoxamine phosphate oxidase activity"/>
    <property type="evidence" value="ECO:0007669"/>
    <property type="project" value="UniProtKB-UniRule"/>
</dbReference>
<dbReference type="GO" id="GO:0008615">
    <property type="term" value="P:pyridoxine biosynthetic process"/>
    <property type="evidence" value="ECO:0007669"/>
    <property type="project" value="UniProtKB-KW"/>
</dbReference>
<dbReference type="Gene3D" id="2.30.110.10">
    <property type="entry name" value="Electron Transport, Fmn-binding Protein, Chain A"/>
    <property type="match status" value="1"/>
</dbReference>
<dbReference type="HAMAP" id="MF_01629">
    <property type="entry name" value="PdxH"/>
    <property type="match status" value="1"/>
</dbReference>
<dbReference type="InterPro" id="IPR000659">
    <property type="entry name" value="Pyridox_Oxase"/>
</dbReference>
<dbReference type="InterPro" id="IPR019740">
    <property type="entry name" value="Pyridox_Oxase_CS"/>
</dbReference>
<dbReference type="InterPro" id="IPR011576">
    <property type="entry name" value="Pyridox_Oxase_N"/>
</dbReference>
<dbReference type="InterPro" id="IPR019576">
    <property type="entry name" value="Pyridoxamine_oxidase_dimer_C"/>
</dbReference>
<dbReference type="InterPro" id="IPR012349">
    <property type="entry name" value="Split_barrel_FMN-bd"/>
</dbReference>
<dbReference type="NCBIfam" id="TIGR00558">
    <property type="entry name" value="pdxH"/>
    <property type="match status" value="1"/>
</dbReference>
<dbReference type="NCBIfam" id="NF004231">
    <property type="entry name" value="PRK05679.1"/>
    <property type="match status" value="1"/>
</dbReference>
<dbReference type="PANTHER" id="PTHR10851:SF0">
    <property type="entry name" value="PYRIDOXINE-5'-PHOSPHATE OXIDASE"/>
    <property type="match status" value="1"/>
</dbReference>
<dbReference type="PANTHER" id="PTHR10851">
    <property type="entry name" value="PYRIDOXINE-5-PHOSPHATE OXIDASE"/>
    <property type="match status" value="1"/>
</dbReference>
<dbReference type="Pfam" id="PF10590">
    <property type="entry name" value="PNP_phzG_C"/>
    <property type="match status" value="1"/>
</dbReference>
<dbReference type="Pfam" id="PF01243">
    <property type="entry name" value="PNPOx_N"/>
    <property type="match status" value="1"/>
</dbReference>
<dbReference type="PIRSF" id="PIRSF000190">
    <property type="entry name" value="Pyd_amn-ph_oxd"/>
    <property type="match status" value="1"/>
</dbReference>
<dbReference type="SUPFAM" id="SSF50475">
    <property type="entry name" value="FMN-binding split barrel"/>
    <property type="match status" value="1"/>
</dbReference>
<dbReference type="PROSITE" id="PS01064">
    <property type="entry name" value="PYRIDOX_OXIDASE"/>
    <property type="match status" value="1"/>
</dbReference>
<organism>
    <name type="scientific">Hahella chejuensis (strain KCTC 2396)</name>
    <dbReference type="NCBI Taxonomy" id="349521"/>
    <lineage>
        <taxon>Bacteria</taxon>
        <taxon>Pseudomonadati</taxon>
        <taxon>Pseudomonadota</taxon>
        <taxon>Gammaproteobacteria</taxon>
        <taxon>Oceanospirillales</taxon>
        <taxon>Hahellaceae</taxon>
        <taxon>Hahella</taxon>
    </lineage>
</organism>
<reference key="1">
    <citation type="journal article" date="2005" name="Nucleic Acids Res.">
        <title>Genomic blueprint of Hahella chejuensis, a marine microbe producing an algicidal agent.</title>
        <authorList>
            <person name="Jeong H."/>
            <person name="Yim J.H."/>
            <person name="Lee C."/>
            <person name="Choi S.-H."/>
            <person name="Park Y.K."/>
            <person name="Yoon S.H."/>
            <person name="Hur C.-G."/>
            <person name="Kang H.-Y."/>
            <person name="Kim D."/>
            <person name="Lee H.H."/>
            <person name="Park K.H."/>
            <person name="Park S.-H."/>
            <person name="Park H.-S."/>
            <person name="Lee H.K."/>
            <person name="Oh T.K."/>
            <person name="Kim J.F."/>
        </authorList>
    </citation>
    <scope>NUCLEOTIDE SEQUENCE [LARGE SCALE GENOMIC DNA]</scope>
    <source>
        <strain>KCTC 2396</strain>
    </source>
</reference>
<evidence type="ECO:0000255" key="1">
    <source>
        <dbReference type="HAMAP-Rule" id="MF_01629"/>
    </source>
</evidence>
<gene>
    <name evidence="1" type="primary">pdxH</name>
    <name type="ordered locus">HCH_04530</name>
</gene>
<keyword id="KW-0285">Flavoprotein</keyword>
<keyword id="KW-0288">FMN</keyword>
<keyword id="KW-0560">Oxidoreductase</keyword>
<keyword id="KW-0664">Pyridoxine biosynthesis</keyword>
<keyword id="KW-1185">Reference proteome</keyword>
<proteinExistence type="inferred from homology"/>
<protein>
    <recommendedName>
        <fullName evidence="1">Pyridoxine/pyridoxamine 5'-phosphate oxidase</fullName>
        <ecNumber evidence="1">1.4.3.5</ecNumber>
    </recommendedName>
    <alternativeName>
        <fullName evidence="1">PNP/PMP oxidase</fullName>
        <shortName evidence="1">PNPOx</shortName>
    </alternativeName>
    <alternativeName>
        <fullName evidence="1">Pyridoxal 5'-phosphate synthase</fullName>
    </alternativeName>
</protein>
<sequence>MKLDDIRREYLYAGLSRKDLADDPIVQFKNWLQTAIDADLNADPTAMSLATVNAQGVPSQRIVLLKNLDPSGFVFYTNLGSRKAQNIAENANVSLHFAWLPMERQICVTGVAEKLSIAEATRYFLSRPHESQVAAWASQQSQGIGSRKLLEQAFEQMKNRFKQGEVPLPSFWGGYRVKPVTIEFWQGRANRLHDRFLYKKTDENWEIERLQP</sequence>
<accession>Q2SDP4</accession>
<feature type="chain" id="PRO_0000255869" description="Pyridoxine/pyridoxamine 5'-phosphate oxidase">
    <location>
        <begin position="1"/>
        <end position="212"/>
    </location>
</feature>
<feature type="binding site" evidence="1">
    <location>
        <begin position="7"/>
        <end position="10"/>
    </location>
    <ligand>
        <name>substrate</name>
    </ligand>
</feature>
<feature type="binding site" evidence="1">
    <location>
        <begin position="61"/>
        <end position="66"/>
    </location>
    <ligand>
        <name>FMN</name>
        <dbReference type="ChEBI" id="CHEBI:58210"/>
    </ligand>
</feature>
<feature type="binding site" evidence="1">
    <location>
        <position position="66"/>
    </location>
    <ligand>
        <name>substrate</name>
    </ligand>
</feature>
<feature type="binding site" evidence="1">
    <location>
        <begin position="76"/>
        <end position="77"/>
    </location>
    <ligand>
        <name>FMN</name>
        <dbReference type="ChEBI" id="CHEBI:58210"/>
    </ligand>
</feature>
<feature type="binding site" evidence="1">
    <location>
        <position position="82"/>
    </location>
    <ligand>
        <name>FMN</name>
        <dbReference type="ChEBI" id="CHEBI:58210"/>
    </ligand>
</feature>
<feature type="binding site" evidence="1">
    <location>
        <position position="83"/>
    </location>
    <ligand>
        <name>FMN</name>
        <dbReference type="ChEBI" id="CHEBI:58210"/>
    </ligand>
</feature>
<feature type="binding site" evidence="1">
    <location>
        <position position="105"/>
    </location>
    <ligand>
        <name>FMN</name>
        <dbReference type="ChEBI" id="CHEBI:58210"/>
    </ligand>
</feature>
<feature type="binding site" evidence="1">
    <location>
        <position position="123"/>
    </location>
    <ligand>
        <name>substrate</name>
    </ligand>
</feature>
<feature type="binding site" evidence="1">
    <location>
        <position position="127"/>
    </location>
    <ligand>
        <name>substrate</name>
    </ligand>
</feature>
<feature type="binding site" evidence="1">
    <location>
        <position position="131"/>
    </location>
    <ligand>
        <name>substrate</name>
    </ligand>
</feature>
<feature type="binding site" evidence="1">
    <location>
        <begin position="140"/>
        <end position="141"/>
    </location>
    <ligand>
        <name>FMN</name>
        <dbReference type="ChEBI" id="CHEBI:58210"/>
    </ligand>
</feature>
<feature type="binding site" evidence="1">
    <location>
        <position position="185"/>
    </location>
    <ligand>
        <name>FMN</name>
        <dbReference type="ChEBI" id="CHEBI:58210"/>
    </ligand>
</feature>
<feature type="binding site" evidence="1">
    <location>
        <begin position="191"/>
        <end position="193"/>
    </location>
    <ligand>
        <name>substrate</name>
    </ligand>
</feature>
<feature type="binding site" evidence="1">
    <location>
        <position position="195"/>
    </location>
    <ligand>
        <name>FMN</name>
        <dbReference type="ChEBI" id="CHEBI:58210"/>
    </ligand>
</feature>